<gene>
    <name type="primary">NP</name>
</gene>
<dbReference type="EMBL" id="AF054908">
    <property type="protein sequence ID" value="AAC09342.1"/>
    <property type="molecule type" value="mRNA"/>
</dbReference>
<dbReference type="EMBL" id="AY354458">
    <property type="protein sequence ID" value="AAQ55045.1"/>
    <property type="molecule type" value="Genomic_RNA"/>
</dbReference>
<dbReference type="PDB" id="5VAO">
    <property type="method" value="X-ray"/>
    <property type="resolution" value="2.56 A"/>
    <property type="chains" value="E/F/G/H=602-612"/>
</dbReference>
<dbReference type="PDB" id="5VAP">
    <property type="method" value="X-ray"/>
    <property type="resolution" value="1.85 A"/>
    <property type="chains" value="C/D=601-612"/>
</dbReference>
<dbReference type="PDB" id="6J2E">
    <property type="method" value="X-ray"/>
    <property type="resolution" value="2.10 A"/>
    <property type="chains" value="C/F=65-74"/>
</dbReference>
<dbReference type="PDB" id="6J2G">
    <property type="method" value="X-ray"/>
    <property type="resolution" value="2.41 A"/>
    <property type="chains" value="C/F=65-75"/>
</dbReference>
<dbReference type="PDB" id="6U54">
    <property type="method" value="X-ray"/>
    <property type="resolution" value="1.60 A"/>
    <property type="chains" value="B=634-739"/>
</dbReference>
<dbReference type="PDBsum" id="5VAO"/>
<dbReference type="PDBsum" id="5VAP"/>
<dbReference type="PDBsum" id="6J2E"/>
<dbReference type="PDBsum" id="6J2G"/>
<dbReference type="PDBsum" id="6U54"/>
<dbReference type="SMR" id="O72142"/>
<dbReference type="IntAct" id="O72142">
    <property type="interactions" value="2"/>
</dbReference>
<dbReference type="ABCD" id="O72142">
    <property type="antibodies" value="6 sequenced antibodies"/>
</dbReference>
<dbReference type="Proteomes" id="UP000007208">
    <property type="component" value="Genome"/>
</dbReference>
<dbReference type="GO" id="GO:0019029">
    <property type="term" value="C:helical viral capsid"/>
    <property type="evidence" value="ECO:0007669"/>
    <property type="project" value="UniProtKB-KW"/>
</dbReference>
<dbReference type="GO" id="GO:0030430">
    <property type="term" value="C:host cell cytoplasm"/>
    <property type="evidence" value="ECO:0007669"/>
    <property type="project" value="UniProtKB-SubCell"/>
</dbReference>
<dbReference type="GO" id="GO:1990904">
    <property type="term" value="C:ribonucleoprotein complex"/>
    <property type="evidence" value="ECO:0007669"/>
    <property type="project" value="UniProtKB-KW"/>
</dbReference>
<dbReference type="GO" id="GO:0019013">
    <property type="term" value="C:viral nucleocapsid"/>
    <property type="evidence" value="ECO:0007669"/>
    <property type="project" value="UniProtKB-KW"/>
</dbReference>
<dbReference type="GO" id="GO:0003723">
    <property type="term" value="F:RNA binding"/>
    <property type="evidence" value="ECO:0007669"/>
    <property type="project" value="UniProtKB-KW"/>
</dbReference>
<dbReference type="GO" id="GO:0019074">
    <property type="term" value="P:viral RNA genome packaging"/>
    <property type="evidence" value="ECO:0007669"/>
    <property type="project" value="InterPro"/>
</dbReference>
<dbReference type="Gene3D" id="1.20.120.1160">
    <property type="match status" value="1"/>
</dbReference>
<dbReference type="InterPro" id="IPR008609">
    <property type="entry name" value="Ebola_NP"/>
</dbReference>
<dbReference type="Pfam" id="PF05505">
    <property type="entry name" value="Ebola_NP"/>
    <property type="match status" value="1"/>
</dbReference>
<dbReference type="PIRSF" id="PIRSF003900">
    <property type="entry name" value="N_FiloV"/>
    <property type="match status" value="1"/>
</dbReference>
<proteinExistence type="evidence at protein level"/>
<feature type="chain" id="PRO_0000222172" description="Nucleoprotein">
    <location>
        <begin position="1"/>
        <end position="739"/>
    </location>
</feature>
<feature type="region of interest" description="Disordered" evidence="3">
    <location>
        <begin position="415"/>
        <end position="646"/>
    </location>
</feature>
<feature type="coiled-coil region" evidence="2">
    <location>
        <begin position="334"/>
        <end position="363"/>
    </location>
</feature>
<feature type="compositionally biased region" description="Low complexity" evidence="3">
    <location>
        <begin position="449"/>
        <end position="458"/>
    </location>
</feature>
<feature type="compositionally biased region" description="Low complexity" evidence="3">
    <location>
        <begin position="504"/>
        <end position="514"/>
    </location>
</feature>
<feature type="compositionally biased region" description="Polar residues" evidence="3">
    <location>
        <begin position="520"/>
        <end position="530"/>
    </location>
</feature>
<feature type="compositionally biased region" description="Acidic residues" evidence="3">
    <location>
        <begin position="567"/>
        <end position="579"/>
    </location>
</feature>
<feature type="compositionally biased region" description="Basic and acidic residues" evidence="3">
    <location>
        <begin position="611"/>
        <end position="638"/>
    </location>
</feature>
<feature type="helix" evidence="5">
    <location>
        <begin position="648"/>
        <end position="659"/>
    </location>
</feature>
<feature type="helix" evidence="5">
    <location>
        <begin position="661"/>
        <end position="672"/>
    </location>
</feature>
<feature type="strand" evidence="5">
    <location>
        <begin position="676"/>
        <end position="679"/>
    </location>
</feature>
<feature type="strand" evidence="5">
    <location>
        <begin position="685"/>
        <end position="688"/>
    </location>
</feature>
<feature type="helix" evidence="5">
    <location>
        <begin position="690"/>
        <end position="692"/>
    </location>
</feature>
<feature type="strand" evidence="5">
    <location>
        <begin position="693"/>
        <end position="696"/>
    </location>
</feature>
<feature type="helix" evidence="5">
    <location>
        <begin position="704"/>
        <end position="706"/>
    </location>
</feature>
<feature type="helix" evidence="5">
    <location>
        <begin position="708"/>
        <end position="711"/>
    </location>
</feature>
<feature type="strand" evidence="5">
    <location>
        <begin position="712"/>
        <end position="715"/>
    </location>
</feature>
<feature type="strand" evidence="5">
    <location>
        <begin position="718"/>
        <end position="721"/>
    </location>
</feature>
<feature type="helix" evidence="5">
    <location>
        <begin position="722"/>
        <end position="724"/>
    </location>
</feature>
<feature type="helix" evidence="5">
    <location>
        <begin position="727"/>
        <end position="737"/>
    </location>
</feature>
<protein>
    <recommendedName>
        <fullName>Nucleoprotein</fullName>
    </recommendedName>
    <alternativeName>
        <fullName>Ebola NP</fullName>
        <shortName>eNP</shortName>
    </alternativeName>
    <alternativeName>
        <fullName>Nucleocapsid protein</fullName>
        <shortName>Protein N</shortName>
    </alternativeName>
</protein>
<accession>O72142</accession>
<accession>Q6V1R0</accession>
<organismHost>
    <name type="scientific">Epomops franqueti</name>
    <name type="common">Franquet's epauletted fruit bat</name>
    <name type="synonym">Epomophorus franqueti</name>
    <dbReference type="NCBI Taxonomy" id="77231"/>
</organismHost>
<organismHost>
    <name type="scientific">Homo sapiens</name>
    <name type="common">Human</name>
    <dbReference type="NCBI Taxonomy" id="9606"/>
</organismHost>
<organismHost>
    <name type="scientific">Myonycteris torquata</name>
    <name type="common">Little collared fruit bat</name>
    <dbReference type="NCBI Taxonomy" id="77243"/>
</organismHost>
<sequence>MDSRPQKVWMTPSLTESDMDYHKILTAGLSVQQGIVRQRVIPVYQVNNLEEICQLIIQAFEAGVDFQESADSFLLMLCLHHAYQGDYKLFLESGAVKYLEGHGFRFEVKKRDGVKRLEELLPAVSSGKNIKRTLAAMPEEETTEANAGQFLSFASLFLPKLVVGEKACLEKVQRQIQVHAEQGLIQYPTAWQSVGHMMVIFRLMRTNFLIKFLLIHQGMHMVAGHDANDAVISNSVAQARFSGLLIVKTVLDHILQKTERGVRLHPLARTAKVKNEVNSFKAALSSLAKHGEYAPFARLLNLSGVNNLEHGLFPQLSAIALGVATAHGSTLAGVNVGEQYQQLREAATEAEKQLQQYAESRELDHLGLDDQEKKILMNFHQKKNEISFQQTNAMVTLRKERLAKLTEAITAASLPKTSGHYDDDDDIPFPGPINDDDNPGHQDDDPTDSQDTTIPDVVVDPDDGSYGEYQSYSENGMNAPDDLVLFDLDEDDEDTKPVPNRSTKGGQQKNSQKGQHTEGRQTQSRPTQNVPGPHRTIHHASAPLTDNDRRNEPSGSTSPRMLTPINEEADPLDDADDETSSLPPLESDDEEQDRDGTSNRTPTVAPPAPVYRDHSEKRELPQDEQQDQDHTQEARNQDSDNTQPEHSFEEMYRHILRSQGPFDAVLYYHMMKDEPVVFSTSDGKEYTYPDSLEEEYPPWLTEKEAMNEENRFVTLDGQQFYWPVMNHKNKFMAILQHHQ</sequence>
<organism>
    <name type="scientific">Zaire ebolavirus (strain Kikwit-95)</name>
    <name type="common">ZEBOV</name>
    <name type="synonym">Zaire Ebola virus</name>
    <dbReference type="NCBI Taxonomy" id="128951"/>
    <lineage>
        <taxon>Viruses</taxon>
        <taxon>Riboviria</taxon>
        <taxon>Orthornavirae</taxon>
        <taxon>Negarnaviricota</taxon>
        <taxon>Haploviricotina</taxon>
        <taxon>Monjiviricetes</taxon>
        <taxon>Mononegavirales</taxon>
        <taxon>Filoviridae</taxon>
        <taxon>Orthoebolavirus</taxon>
        <taxon>Orthoebolavirus zairense</taxon>
        <taxon>Zaire ebolavirus</taxon>
    </lineage>
</organism>
<reference key="1">
    <citation type="journal article" date="1998" name="Virology">
        <title>DNA vaccines expressing either the GP or NP genes of Ebola virus protect mice from lethal challenge.</title>
        <authorList>
            <person name="Vanderzanden L."/>
            <person name="Bray M."/>
            <person name="Fuller D."/>
            <person name="Roberts T."/>
            <person name="Custer D."/>
            <person name="Spik K."/>
            <person name="Jahrling P."/>
            <person name="Huggins J."/>
            <person name="Schmaljohn A."/>
            <person name="Schmaljohn C."/>
        </authorList>
    </citation>
    <scope>NUCLEOTIDE SEQUENCE [MRNA]</scope>
</reference>
<reference key="2">
    <citation type="submission" date="2003-07" db="EMBL/GenBank/DDBJ databases">
        <authorList>
            <person name="Chain P.S.G."/>
            <person name="Ichou M.A."/>
            <person name="Malfatti S.A."/>
            <person name="Hajjaj A."/>
            <person name="Vergez L.M."/>
            <person name="Paragas J."/>
            <person name="Do L.H."/>
            <person name="Jahrling P.B."/>
            <person name="Smith K.L."/>
            <person name="McCready P.M."/>
            <person name="Ibrahim M.S."/>
        </authorList>
    </citation>
    <scope>NUCLEOTIDE SEQUENCE [GENOMIC RNA]</scope>
</reference>
<name>NCAP_EBOZ5</name>
<evidence type="ECO:0000250" key="1">
    <source>
        <dbReference type="UniProtKB" id="P18272"/>
    </source>
</evidence>
<evidence type="ECO:0000255" key="2"/>
<evidence type="ECO:0000256" key="3">
    <source>
        <dbReference type="SAM" id="MobiDB-lite"/>
    </source>
</evidence>
<evidence type="ECO:0000305" key="4"/>
<evidence type="ECO:0007829" key="5">
    <source>
        <dbReference type="PDB" id="6U54"/>
    </source>
</evidence>
<keyword id="KW-0002">3D-structure</keyword>
<keyword id="KW-0167">Capsid protein</keyword>
<keyword id="KW-0175">Coiled coil</keyword>
<keyword id="KW-1139">Helical capsid protein</keyword>
<keyword id="KW-1035">Host cytoplasm</keyword>
<keyword id="KW-0597">Phosphoprotein</keyword>
<keyword id="KW-0687">Ribonucleoprotein</keyword>
<keyword id="KW-0694">RNA-binding</keyword>
<keyword id="KW-0543">Viral nucleoprotein</keyword>
<keyword id="KW-0946">Virion</keyword>
<comment type="function">
    <text evidence="1">Oligomerizes into helical capsid to encapsidate the viral genome, protecting it from nucleases and the cellular innate immune response. VP35 binds to and stabilizes monomeric NP, keeping it soluble. Upon virus replication, NP is recruited to bind cooperatively viral genomic RNA and VP35 is released. The encapsidated genomic RNA is termed the nucleocapsid and serves as template for transcription and replication. The nucleocapsid is helical with a pitch of 10.81 NP per turn and a diameter of about 22nm. Each NP binds to six nucleotides of viral genomic RNA, three being exposed to the solvant and three hidden into the nucleocapsid. Also recruits host PPP2R5C phosphatase to dephosphorylate VP30 and thereby promote viral transcription. Upon virion assembly and budding, NP binds to VP24 and possibly host STAU1.</text>
</comment>
<comment type="subunit">
    <text evidence="1">Homooligomer. Homomultimerizes to form the nucleocapsid. Binds to viral genomic RNA. Interacts with VP35 and VP30 to form the nucleocapsid. Interacts with host PPP2R5C; this interaction leads to VP30 dephosphorylation and viral transcription. Interacts with VP24; this interaction facilitates nucleocapsid assembly and genome packaging. Interacts with matrix protein VP40; this interaction allows recruitment of the nucleocapsid into progeny virions. Interacts with host STAU1. Interacts with host NXF1 (via RNA-binding domain); this interaction recruits NXF1 to the inclusion bodies were viral replication takes place, probably to export viral mRNA-NXF1 complexes from these sites. Interacts with host CCDC92; this interaction sequesters NP in the host cytoplasm. Interacts with host TRIM14.</text>
</comment>
<comment type="subcellular location">
    <subcellularLocation>
        <location evidence="1">Virion</location>
    </subcellularLocation>
    <subcellularLocation>
        <location evidence="1">Host cytoplasm</location>
    </subcellularLocation>
</comment>
<comment type="domain">
    <text evidence="1">Comprizes a N-terminal arm involved in oligomerization, a NP core region involved in RNA binding, a disordered region follwoed by a C-terminal tail involved in protein-protein interactions. During oligomerization, NP N-terminal arm binds to a neighbor NP thereby displacing VP35 bound to monomeric NP.</text>
</comment>
<comment type="PTM">
    <text evidence="1">Phosphorylated and O-glycosylated by host. Acetylated by host EP300 in vitro.</text>
</comment>
<comment type="similarity">
    <text evidence="4">Belongs to the filoviruses nucleoprotein family.</text>
</comment>